<dbReference type="EMBL" id="AE017332">
    <property type="protein sequence ID" value="AAV27731.1"/>
    <property type="molecule type" value="Genomic_DNA"/>
</dbReference>
<dbReference type="RefSeq" id="WP_011205973.1">
    <property type="nucleotide sequence ID" value="NC_006360.1"/>
</dbReference>
<dbReference type="SMR" id="Q601R6"/>
<dbReference type="KEGG" id="mhy:mhp135"/>
<dbReference type="eggNOG" id="COG0268">
    <property type="taxonomic scope" value="Bacteria"/>
</dbReference>
<dbReference type="HOGENOM" id="CLU_160655_1_2_14"/>
<dbReference type="PhylomeDB" id="Q601R6"/>
<dbReference type="Proteomes" id="UP000006822">
    <property type="component" value="Chromosome"/>
</dbReference>
<dbReference type="GO" id="GO:0005829">
    <property type="term" value="C:cytosol"/>
    <property type="evidence" value="ECO:0007669"/>
    <property type="project" value="TreeGrafter"/>
</dbReference>
<dbReference type="GO" id="GO:0015935">
    <property type="term" value="C:small ribosomal subunit"/>
    <property type="evidence" value="ECO:0007669"/>
    <property type="project" value="TreeGrafter"/>
</dbReference>
<dbReference type="GO" id="GO:0070181">
    <property type="term" value="F:small ribosomal subunit rRNA binding"/>
    <property type="evidence" value="ECO:0007669"/>
    <property type="project" value="TreeGrafter"/>
</dbReference>
<dbReference type="GO" id="GO:0003735">
    <property type="term" value="F:structural constituent of ribosome"/>
    <property type="evidence" value="ECO:0007669"/>
    <property type="project" value="InterPro"/>
</dbReference>
<dbReference type="GO" id="GO:0006412">
    <property type="term" value="P:translation"/>
    <property type="evidence" value="ECO:0007669"/>
    <property type="project" value="UniProtKB-UniRule"/>
</dbReference>
<dbReference type="Gene3D" id="1.20.58.110">
    <property type="entry name" value="Ribosomal protein S20"/>
    <property type="match status" value="1"/>
</dbReference>
<dbReference type="HAMAP" id="MF_00500">
    <property type="entry name" value="Ribosomal_bS20"/>
    <property type="match status" value="1"/>
</dbReference>
<dbReference type="InterPro" id="IPR002583">
    <property type="entry name" value="Ribosomal_bS20"/>
</dbReference>
<dbReference type="InterPro" id="IPR036510">
    <property type="entry name" value="Ribosomal_bS20_sf"/>
</dbReference>
<dbReference type="NCBIfam" id="TIGR00029">
    <property type="entry name" value="S20"/>
    <property type="match status" value="1"/>
</dbReference>
<dbReference type="PANTHER" id="PTHR33398">
    <property type="entry name" value="30S RIBOSOMAL PROTEIN S20"/>
    <property type="match status" value="1"/>
</dbReference>
<dbReference type="PANTHER" id="PTHR33398:SF1">
    <property type="entry name" value="SMALL RIBOSOMAL SUBUNIT PROTEIN BS20C"/>
    <property type="match status" value="1"/>
</dbReference>
<dbReference type="Pfam" id="PF01649">
    <property type="entry name" value="Ribosomal_S20p"/>
    <property type="match status" value="1"/>
</dbReference>
<dbReference type="SUPFAM" id="SSF46992">
    <property type="entry name" value="Ribosomal protein S20"/>
    <property type="match status" value="1"/>
</dbReference>
<keyword id="KW-0687">Ribonucleoprotein</keyword>
<keyword id="KW-0689">Ribosomal protein</keyword>
<keyword id="KW-0694">RNA-binding</keyword>
<keyword id="KW-0699">rRNA-binding</keyword>
<gene>
    <name evidence="1" type="primary">rpsT</name>
    <name type="ordered locus">mhp135</name>
</gene>
<name>RS20_MESH2</name>
<comment type="function">
    <text evidence="1">Binds directly to 16S ribosomal RNA.</text>
</comment>
<comment type="similarity">
    <text evidence="1">Belongs to the bacterial ribosomal protein bS20 family.</text>
</comment>
<accession>Q601R6</accession>
<evidence type="ECO:0000255" key="1">
    <source>
        <dbReference type="HAMAP-Rule" id="MF_00500"/>
    </source>
</evidence>
<evidence type="ECO:0000305" key="2"/>
<reference key="1">
    <citation type="journal article" date="2004" name="J. Bacteriol.">
        <title>The genome sequence of Mycoplasma hyopneumoniae strain 232, the agent of swine mycoplasmosis.</title>
        <authorList>
            <person name="Minion F.C."/>
            <person name="Lefkowitz E.J."/>
            <person name="Madsen M.L."/>
            <person name="Cleary B.J."/>
            <person name="Swartzell S.M."/>
            <person name="Mahairas G.G."/>
        </authorList>
    </citation>
    <scope>NUCLEOTIDE SEQUENCE [LARGE SCALE GENOMIC DNA]</scope>
    <source>
        <strain>232</strain>
    </source>
</reference>
<organism>
    <name type="scientific">Mesomycoplasma hyopneumoniae (strain 232)</name>
    <name type="common">Mycoplasma hyopneumoniae</name>
    <dbReference type="NCBI Taxonomy" id="295358"/>
    <lineage>
        <taxon>Bacteria</taxon>
        <taxon>Bacillati</taxon>
        <taxon>Mycoplasmatota</taxon>
        <taxon>Mycoplasmoidales</taxon>
        <taxon>Metamycoplasmataceae</taxon>
        <taxon>Mesomycoplasma</taxon>
    </lineage>
</organism>
<feature type="chain" id="PRO_0000167991" description="Small ribosomal subunit protein bS20">
    <location>
        <begin position="1"/>
        <end position="90"/>
    </location>
</feature>
<sequence length="90" mass="9925">MANIKSKIKSITKMQKARARNNAIKSRVKTAIKKAKIAISTDASNKSDLIAKAHSEISKAKSKGVFHKNKANRKISRLNLFANTYTTPAQ</sequence>
<proteinExistence type="inferred from homology"/>
<protein>
    <recommendedName>
        <fullName evidence="1">Small ribosomal subunit protein bS20</fullName>
    </recommendedName>
    <alternativeName>
        <fullName evidence="2">30S ribosomal protein S20</fullName>
    </alternativeName>
</protein>